<sequence length="2646" mass="297589">MSTCCWCTPGGSSTIDVLKRYASSTGSSEFQTADEDLCYCLECVAEYHRARDEVPFLHEVLWELETLRLVSHFEKSMKAEAEDDDDLYIVDNNGEEQLFDCSGQDFENKLRVPLFEILKYPYLLLHERVNELCVEALCRMEQNNCSFQVFDKYPGIYLFLVHPNEMVRRWAILTARNLGKVDRDDYYDLQEVLTCLFKVIELGLLESPDIYTSSVLEKGKLILLPAHMYDTTNYKNYWLGICMLLTILEEQAMDSLLLGSDKQNDFMQSILHTMEKQSDDDSMDPFWPALHCFMVILDRLGSKVWGQLIDPIEAFQTIINNESYNREIQNIRNSSIRTKLEPEPHFDDMVTCSQIVYNFNPEKTKKDSGWRSAICPDYCPNMYEEMETLANVLQSDIGQDMRVHNSTFLWFIPFVQSLMDLKDLGVAYIVEVIHHLYSEVKDVLNQTDAVCDKVTEFFILILISVIELHRNKKCLHLLWVSSQQWVEAVVKCAKLPTTAFVRSCEKSPGSTSRGAAIMSSLALHSVQSNSVQLACVQLIRGLLKEGYQLGQQTLCKRFWDKLNLFLRGNLSLGWQLTGQETHELQMCLKQIIRNIKFKMPQYSTFGDSTSTFKTPPSFKEESDKIDRKHKKNIYCLENCSPVSSKEPMKADTHRVLMKVNTTEEENFKQHYIDLNEEEQEPLPAELCLKQKSEALFSESAQEQVKISAEKSGKESSSYAPSNSTSRNGPEWGCDRGVIMSAHSLTDSSSDFMEQVSTSNEDVSLKDGSVGKTSKPSFKLQKDEICAKLSHVIKKQIRKSTLVDNIIDLEENTAISDLENCSGTDGGALKEDSIGHNVPSDPVLDDKHEEQKSQNSSLFKKEIKSEELDNSSSDDEDKLQIQEGRADDDLVSFTEVTDTLVKAPCEGHVKMVVESRDKEMRESTALTSNLVEGQVPHDSSKPLVAGRQIDLCNITLISQTTVIQFPSGLSKQNSFQLQKGDKRCLTANQNSAATCRGQVIVISDSDEEEDEDEDERSSSEENIKQSKACIGKDCSEHRSLAVNASVEKQLVKEEERYPVEFEDSESQVFEFESSSEVFSVWQDHKIDSKNSLQGEQKSYVTHVADSTNNNLGCGDSVSEEVVRNKAEGVKEHAGPHSSVSAEEFCKTGVKKPKRKRYDKVTAEDPQRPSSSVGTDQLPDRRDLTESDLKSADMGMATPSSSVERDSTILQKSTKSRTHSKPVRKVPASKATKKTHSDTRRGQSKSSCYISCRTSPAIVPPKKLRQCPEPTSTVEKLGLKKAPRKAFELSQRSLECIVQLRDHGKTVGVVDAPKKAKLISPQTLSIKNNKKLLTSQDLQFQRLMRSRSHKKRDFDYKNTDTVRVSRIVQGSDVLEADSDEPDDHRVSEPLAISNEKQLAKCMLSKTEVAEASSDPWVTGITCLVNQCESRVLSGGVPTDVVMVSASEDPVDGGAVTVQVGEVASVKAAEPASSSDTDDDDNLFLTQHDPQDMDLCSQLENKTIIVAHKKDTVQREDSLSRPQLESLSITKCKYKDCVETTKNQGEYCPRHSEAKAADDGLFRKPGLPLSVARPLRPTTTKIFSSSSASRTANLSKSLESTTLQQSALKNKSSGAQPNLKVTPPSSMGSQKPVAEVKSLCNIFHFQTPSSSSKQSCKLTFSENRPTSAASPVNILLPSQSIFDTFIKEVLKWKYQMFLNFDKCGAPTSLCQSISRPVPVRFQDCAEYFNVFLPLIILNAFETVAQEWLSSPNKENFYQLQLRKFPADYKKYWEFLIYLNESELAKQLHPKENDLVFLAPEKSYMDRHGMQDCSHYYCGYVHKFRRTSVMRSGKAECSLCIQTQDTLPASVKNLTRCIVISSLVTTQRKLKAMSLLSSRNQLARAVLNPNPMDFCTKDLLTTTSERIVAYLKDFNEDQKKAIETAYAMVKHSPSVAKICLIHGPPGTGKSKTIVGLLYRLLTENQRKGHSDENFNAKIKQNRVLVCAPSNAAVDELMKKIILEFKEKCKDKKNPLGNCGDINLVRLGPEKSINTEVLKFSLDSQVNHRMKKDLPSHIQEMLRRKEILDAQLDELSRQRALCRGGREMQRQELDEHIAIVSKERQELASKIKEVQGRPQRAQNTIILESHVICCTLSTSGGLLLESAFRGQGGVPFSCVIVDEAGQSCEVETLSPLIHRCNKLILVGDPKQLPPTVISMKAQEYGYDQSMMARFCKLLEENVEQNMIGRLPVLQLTIQYRMHPDICLFPSNYVYNKNLKTNRLTESIRCSSEWPFQPYLVFDVGDGSERRDNDSYINVQEIKLVMEIIKLIKEKRKDISFRNIGIITHYKAQKTMIQKDLEKEFDKKGPAEVDTVDAFQGRQKDCIIVTCVRASAVQGSIGFLASLQRLNVTITRAKYSLFILGHLRTLMENQHWYELIQDAQKRGAIIKTSDPNYRHDAMKILKLKPVLQRSLTHPPATAPEAPRPQGGLPSNRLDSGLATTSFAASLYHTPSDTVTSKGPERPLLQDRLRDPRLLRRLDAEAKGTFLKDPQPVSPQLPGVVHLLGEPGFPVVFQDLGFVVPPSTAIVAPLGSHRSPMQAEPPPAHPAAAASTSKRKYSDPDAGLSHKREPRAFSGEQGRHGSVTHHVLRSTDWDRRRLDDSSAKRRQFL</sequence>
<keyword id="KW-0025">Alternative splicing</keyword>
<keyword id="KW-0067">ATP-binding</keyword>
<keyword id="KW-0090">Biological rhythms</keyword>
<keyword id="KW-0966">Cell projection</keyword>
<keyword id="KW-0158">Chromosome</keyword>
<keyword id="KW-0175">Coiled coil</keyword>
<keyword id="KW-0963">Cytoplasm</keyword>
<keyword id="KW-0221">Differentiation</keyword>
<keyword id="KW-0227">DNA damage</keyword>
<keyword id="KW-0233">DNA recombination</keyword>
<keyword id="KW-0234">DNA repair</keyword>
<keyword id="KW-0347">Helicase</keyword>
<keyword id="KW-0378">Hydrolase</keyword>
<keyword id="KW-1017">Isopeptide bond</keyword>
<keyword id="KW-0524">Neurogenesis</keyword>
<keyword id="KW-0547">Nucleotide-binding</keyword>
<keyword id="KW-0539">Nucleus</keyword>
<keyword id="KW-0597">Phosphoprotein</keyword>
<keyword id="KW-1185">Reference proteome</keyword>
<keyword id="KW-0744">Spermatogenesis</keyword>
<keyword id="KW-0779">Telomere</keyword>
<keyword id="KW-0832">Ubl conjugation</keyword>
<comment type="function">
    <text evidence="2 6 7">Probable RNA/DNA helicase involved in diverse aspects of RNA metabolism and genomic integrity. Plays a role in transcription regulation by its ability to modulate RNA Polymerase II (Pol II) binding to chromatin and through its interaction with proteins involved in transcription. Contributes to the mRNA splicing efficiency and splice site selection. Required for the resolution of R-loop RNA-DNA hybrid formation at G-rich pause sites located downstream of the poly(A) site, allowing XRN2 recruitment and XRN2-mediated degradation of the downstream cleaved RNA and hence efficient RNA polymerase II (RNAp II) transcription termination (By similarity). Required for the 3' transcriptional termination of PER1 and CRY2, thus playing an important role in the circadian rhythm regulation (PubMed:22767893). Involved in DNA double-strand breaks damage response generated by oxidative stress. In association with RRP45, targets the RNA exosome complex to sites of transcription-induced DNA damage (By similarity). Plays a role in the development and maturation of germ cells: essential for male meiosis, acting at the interface of transcription and meiotic recombination, and in the process of gene silencing during meiotic sex chromosome inactivation (MSCI) (PubMed:23593030). Plays a role in neurite outgrowth in hippocampal cells through FGF8-activated signaling pathways. Inhibits retinoic acid-induced apoptosis. May be involved in telomeric stability through the regulation of telomere repeat-containing RNA (TERRA) transcription (By similarity).</text>
</comment>
<comment type="subunit">
    <text evidence="2 6">Homodimer (By similarity). Interacts with PER2; the interaction inhibits termination of circadian target genes (PubMed:22767893). Interacts with CHD4, POLR2A, PRKDC and TRIM28. Interacts with UBE2I. Interacts (via N-terminus domain) with EXOSC9 (via C-terminus region); the interaction enhances SETX sumoylation. Interacts with NCL (via N-terminus domain). Interacts with PABPN1, PABPC1 and SF3B1. Interacts with SMN1/SMN2 and POLR2A; SMN1/SMN2 recruits SETX to POLR2A (By similarity).</text>
</comment>
<comment type="subcellular location">
    <subcellularLocation>
        <location evidence="2">Nucleus</location>
    </subcellularLocation>
    <subcellularLocation>
        <location evidence="5">Nucleus</location>
        <location evidence="5">Nucleoplasm</location>
    </subcellularLocation>
    <subcellularLocation>
        <location evidence="5">Nucleus</location>
        <location evidence="5">Nucleolus</location>
    </subcellularLocation>
    <subcellularLocation>
        <location evidence="5">Cytoplasm</location>
    </subcellularLocation>
    <subcellularLocation>
        <location evidence="7">Chromosome</location>
    </subcellularLocation>
    <subcellularLocation>
        <location evidence="2">Chromosome</location>
        <location evidence="2">Telomere</location>
    </subcellularLocation>
    <subcellularLocation>
        <location evidence="2">Cell projection</location>
        <location evidence="2">Axon</location>
    </subcellularLocation>
    <subcellularLocation>
        <location evidence="2">Cell projection</location>
        <location evidence="2">Growth cone</location>
    </subcellularLocation>
    <text evidence="2 5 7">Most abundant in the nucleus (By similarity). Detected in granules (By similarity). Colocalized in cycling cells with FBL in the nucleolus. Localizes with telomeric DNA in a transcription-dependent manner. Under replication stress, colocalizes with a variety of DNA damage signaling and repair response proteins at distinct nuclear foci in mitotic S/G2- and G1-phase cells in a transcription- and RNA/DNA hybrid-dependent manner. Localizes at limited number of nuclear foci. Colocalizes with EXOSC9 in nuclear foci upon induction of transcription-related DNA damage at the S phase (By similarity). At pachytene stage, colocalizes predominantly to the heterochromatic XY-body of sex chromosomes with DNA damage response proteins in a BRCA1-dependent manner (PubMed:23593030). May be detected in the nucleolus only in cycling cells (PubMed:16644229).</text>
</comment>
<comment type="alternative products">
    <event type="alternative splicing"/>
    <isoform>
        <id>A2AKX3-1</id>
        <name>1</name>
        <sequence type="displayed"/>
    </isoform>
    <isoform>
        <id>A2AKX3-2</id>
        <name>2</name>
        <sequence type="described" ref="VSP_028827"/>
    </isoform>
</comment>
<comment type="tissue specificity">
    <text evidence="5">Expressed in cerebellum, hippocampus, olfactory bulb, Bergmann glial fibers, stellate cells and Purkinje cells. Expressed in the epithelial cells of the lens but not in mature lens fiber cells. Expressed in the retina (highly expressed in inner and outer segments of photoreceptors and outer plexiform layer cells but weakly expressed in the inner plexiform and ganglion cell layers). Expressed in the kidney.</text>
</comment>
<comment type="domain">
    <text evidence="2">The N-terminus domain is necessary for S/G2 nuclear foci localization.</text>
</comment>
<comment type="PTM">
    <text evidence="2">Ubiquitinated.</text>
</comment>
<comment type="PTM">
    <text evidence="2">Sumoylated preferentially with SUMO2 or SUMO3.</text>
</comment>
<comment type="disruption phenotype">
    <text evidence="7">Mice are viable. Male germ cells proceed normally from spermatogonia up to the meiotic pachytene stage but fail to enter into spermiogenesis and form mature spermatids (PubMed:23593030), resulting in male infertility. In particular, during spermatogenesis, male germ cells accumulated DNA:RNA hybrids (R-loops), meiotic DNA double-strand breaks, and fails to produce crossovers and meiotic sex chromosome inactivation (MSCI) (PubMed:23593030).</text>
</comment>
<comment type="similarity">
    <text evidence="9">Belongs to the DNA2/NAM7 helicase family.</text>
</comment>
<comment type="sequence caution" evidence="9">
    <conflict type="frameshift">
        <sequence resource="EMBL-CDS" id="BAC32054"/>
    </conflict>
</comment>
<comment type="sequence caution" evidence="9">
    <conflict type="miscellaneous discrepancy">
        <sequence resource="EMBL-CDS" id="BAC97987"/>
    </conflict>
    <text>The sequence differs from that shown because it is derived from pre-RNA.</text>
</comment>
<dbReference type="EC" id="3.6.4.-"/>
<dbReference type="EMBL" id="AL772379">
    <property type="status" value="NOT_ANNOTATED_CDS"/>
    <property type="molecule type" value="Genomic_DNA"/>
</dbReference>
<dbReference type="EMBL" id="AL845267">
    <property type="status" value="NOT_ANNOTATED_CDS"/>
    <property type="molecule type" value="Genomic_DNA"/>
</dbReference>
<dbReference type="EMBL" id="AK044730">
    <property type="protein sequence ID" value="BAC32054.1"/>
    <property type="status" value="ALT_FRAME"/>
    <property type="molecule type" value="mRNA"/>
</dbReference>
<dbReference type="EMBL" id="AK048354">
    <property type="protein sequence ID" value="BAC33309.2"/>
    <property type="molecule type" value="mRNA"/>
</dbReference>
<dbReference type="EMBL" id="AK077911">
    <property type="protein sequence ID" value="BAC37058.1"/>
    <property type="molecule type" value="mRNA"/>
</dbReference>
<dbReference type="EMBL" id="BC046382">
    <property type="protein sequence ID" value="AAH46382.1"/>
    <property type="molecule type" value="mRNA"/>
</dbReference>
<dbReference type="EMBL" id="BC058109">
    <property type="protein sequence ID" value="AAH58109.2"/>
    <property type="molecule type" value="mRNA"/>
</dbReference>
<dbReference type="EMBL" id="BC079604">
    <property type="protein sequence ID" value="AAH79604.2"/>
    <property type="molecule type" value="mRNA"/>
</dbReference>
<dbReference type="EMBL" id="AK129177">
    <property type="protein sequence ID" value="BAC97987.1"/>
    <property type="status" value="ALT_SEQ"/>
    <property type="molecule type" value="Transcribed_RNA"/>
</dbReference>
<dbReference type="EMBL" id="BK001523">
    <property type="protein sequence ID" value="DAA01946.1"/>
    <property type="molecule type" value="mRNA"/>
</dbReference>
<dbReference type="CCDS" id="CCDS38090.1">
    <molecule id="A2AKX3-1"/>
</dbReference>
<dbReference type="RefSeq" id="NP_932150.2">
    <molecule id="A2AKX3-1"/>
    <property type="nucleotide sequence ID" value="NM_198033.2"/>
</dbReference>
<dbReference type="SMR" id="A2AKX3"/>
<dbReference type="BioGRID" id="234629">
    <property type="interactions" value="11"/>
</dbReference>
<dbReference type="DIP" id="DIP-56995N"/>
<dbReference type="FunCoup" id="A2AKX3">
    <property type="interactions" value="2993"/>
</dbReference>
<dbReference type="IntAct" id="A2AKX3">
    <property type="interactions" value="6"/>
</dbReference>
<dbReference type="MINT" id="A2AKX3"/>
<dbReference type="STRING" id="10090.ENSMUSP00000051492"/>
<dbReference type="GlyGen" id="A2AKX3">
    <property type="glycosylation" value="4 sites, 2 N-linked glycans (2 sites), 1 O-linked glycan (2 sites)"/>
</dbReference>
<dbReference type="iPTMnet" id="A2AKX3"/>
<dbReference type="PhosphoSitePlus" id="A2AKX3"/>
<dbReference type="SwissPalm" id="A2AKX3"/>
<dbReference type="jPOST" id="A2AKX3"/>
<dbReference type="PaxDb" id="10090-ENSMUSP00000051492"/>
<dbReference type="PeptideAtlas" id="A2AKX3"/>
<dbReference type="ProteomicsDB" id="257128">
    <molecule id="A2AKX3-1"/>
</dbReference>
<dbReference type="ProteomicsDB" id="257129">
    <molecule id="A2AKX3-2"/>
</dbReference>
<dbReference type="Pumba" id="A2AKX3"/>
<dbReference type="Antibodypedia" id="31672">
    <property type="antibodies" value="363 antibodies from 22 providers"/>
</dbReference>
<dbReference type="DNASU" id="269254"/>
<dbReference type="Ensembl" id="ENSMUST00000061578.9">
    <molecule id="A2AKX3-1"/>
    <property type="protein sequence ID" value="ENSMUSP00000051492.3"/>
    <property type="gene ID" value="ENSMUSG00000043535.14"/>
</dbReference>
<dbReference type="GeneID" id="269254"/>
<dbReference type="KEGG" id="mmu:269254"/>
<dbReference type="UCSC" id="uc008izm.1">
    <molecule id="A2AKX3-1"/>
    <property type="organism name" value="mouse"/>
</dbReference>
<dbReference type="AGR" id="MGI:2443480"/>
<dbReference type="CTD" id="23064"/>
<dbReference type="MGI" id="MGI:2443480">
    <property type="gene designation" value="Setx"/>
</dbReference>
<dbReference type="VEuPathDB" id="HostDB:ENSMUSG00000043535"/>
<dbReference type="eggNOG" id="KOG1801">
    <property type="taxonomic scope" value="Eukaryota"/>
</dbReference>
<dbReference type="GeneTree" id="ENSGT00940000160918"/>
<dbReference type="HOGENOM" id="CLU_000967_0_0_1"/>
<dbReference type="InParanoid" id="A2AKX3"/>
<dbReference type="OMA" id="NIFFPLM"/>
<dbReference type="OrthoDB" id="6513042at2759"/>
<dbReference type="PhylomeDB" id="A2AKX3"/>
<dbReference type="TreeFam" id="TF324634"/>
<dbReference type="BioGRID-ORCS" id="269254">
    <property type="hits" value="2 hits in 115 CRISPR screens"/>
</dbReference>
<dbReference type="ChiTaRS" id="Setx">
    <property type="organism name" value="mouse"/>
</dbReference>
<dbReference type="PRO" id="PR:A2AKX3"/>
<dbReference type="Proteomes" id="UP000000589">
    <property type="component" value="Chromosome 2"/>
</dbReference>
<dbReference type="RNAct" id="A2AKX3">
    <property type="molecule type" value="protein"/>
</dbReference>
<dbReference type="Bgee" id="ENSMUSG00000043535">
    <property type="expression patterns" value="Expressed in spermatocyte and 224 other cell types or tissues"/>
</dbReference>
<dbReference type="ExpressionAtlas" id="A2AKX3">
    <property type="expression patterns" value="baseline and differential"/>
</dbReference>
<dbReference type="GO" id="GO:0030424">
    <property type="term" value="C:axon"/>
    <property type="evidence" value="ECO:0000250"/>
    <property type="project" value="UniProtKB"/>
</dbReference>
<dbReference type="GO" id="GO:0000781">
    <property type="term" value="C:chromosome, telomeric region"/>
    <property type="evidence" value="ECO:0007669"/>
    <property type="project" value="UniProtKB-SubCell"/>
</dbReference>
<dbReference type="GO" id="GO:0005737">
    <property type="term" value="C:cytoplasm"/>
    <property type="evidence" value="ECO:0000250"/>
    <property type="project" value="UniProtKB"/>
</dbReference>
<dbReference type="GO" id="GO:0030426">
    <property type="term" value="C:growth cone"/>
    <property type="evidence" value="ECO:0000250"/>
    <property type="project" value="UniProtKB"/>
</dbReference>
<dbReference type="GO" id="GO:0045171">
    <property type="term" value="C:intercellular bridge"/>
    <property type="evidence" value="ECO:0007669"/>
    <property type="project" value="Ensembl"/>
</dbReference>
<dbReference type="GO" id="GO:0016604">
    <property type="term" value="C:nuclear body"/>
    <property type="evidence" value="ECO:0007669"/>
    <property type="project" value="Ensembl"/>
</dbReference>
<dbReference type="GO" id="GO:0000228">
    <property type="term" value="C:nuclear chromosome"/>
    <property type="evidence" value="ECO:0000250"/>
    <property type="project" value="UniProtKB"/>
</dbReference>
<dbReference type="GO" id="GO:0005730">
    <property type="term" value="C:nucleolus"/>
    <property type="evidence" value="ECO:0007669"/>
    <property type="project" value="UniProtKB-SubCell"/>
</dbReference>
<dbReference type="GO" id="GO:0005654">
    <property type="term" value="C:nucleoplasm"/>
    <property type="evidence" value="ECO:0000250"/>
    <property type="project" value="UniProtKB"/>
</dbReference>
<dbReference type="GO" id="GO:0005634">
    <property type="term" value="C:nucleus"/>
    <property type="evidence" value="ECO:0000250"/>
    <property type="project" value="UniProtKB"/>
</dbReference>
<dbReference type="GO" id="GO:0005524">
    <property type="term" value="F:ATP binding"/>
    <property type="evidence" value="ECO:0007669"/>
    <property type="project" value="UniProtKB-KW"/>
</dbReference>
<dbReference type="GO" id="GO:0004386">
    <property type="term" value="F:helicase activity"/>
    <property type="evidence" value="ECO:0007669"/>
    <property type="project" value="UniProtKB-KW"/>
</dbReference>
<dbReference type="GO" id="GO:0016787">
    <property type="term" value="F:hydrolase activity"/>
    <property type="evidence" value="ECO:0007669"/>
    <property type="project" value="UniProtKB-KW"/>
</dbReference>
<dbReference type="GO" id="GO:0042802">
    <property type="term" value="F:identical protein binding"/>
    <property type="evidence" value="ECO:0007669"/>
    <property type="project" value="Ensembl"/>
</dbReference>
<dbReference type="GO" id="GO:0001147">
    <property type="term" value="F:transcription termination site sequence-specific DNA binding"/>
    <property type="evidence" value="ECO:0000250"/>
    <property type="project" value="UniProtKB"/>
</dbReference>
<dbReference type="GO" id="GO:0030154">
    <property type="term" value="P:cell differentiation"/>
    <property type="evidence" value="ECO:0007669"/>
    <property type="project" value="UniProtKB-KW"/>
</dbReference>
<dbReference type="GO" id="GO:0070301">
    <property type="term" value="P:cellular response to hydrogen peroxide"/>
    <property type="evidence" value="ECO:0000250"/>
    <property type="project" value="UniProtKB"/>
</dbReference>
<dbReference type="GO" id="GO:0034599">
    <property type="term" value="P:cellular response to oxidative stress"/>
    <property type="evidence" value="ECO:0000250"/>
    <property type="project" value="UniProtKB"/>
</dbReference>
<dbReference type="GO" id="GO:0007623">
    <property type="term" value="P:circadian rhythm"/>
    <property type="evidence" value="ECO:0000315"/>
    <property type="project" value="MGI"/>
</dbReference>
<dbReference type="GO" id="GO:0006974">
    <property type="term" value="P:DNA damage response"/>
    <property type="evidence" value="ECO:0000250"/>
    <property type="project" value="UniProtKB"/>
</dbReference>
<dbReference type="GO" id="GO:0006310">
    <property type="term" value="P:DNA recombination"/>
    <property type="evidence" value="ECO:0007669"/>
    <property type="project" value="UniProtKB-KW"/>
</dbReference>
<dbReference type="GO" id="GO:0006353">
    <property type="term" value="P:DNA-templated transcription termination"/>
    <property type="evidence" value="ECO:0000250"/>
    <property type="project" value="UniProtKB"/>
</dbReference>
<dbReference type="GO" id="GO:0006302">
    <property type="term" value="P:double-strand break repair"/>
    <property type="evidence" value="ECO:0000250"/>
    <property type="project" value="UniProtKB"/>
</dbReference>
<dbReference type="GO" id="GO:0006376">
    <property type="term" value="P:mRNA splice site recognition"/>
    <property type="evidence" value="ECO:0000250"/>
    <property type="project" value="UniProtKB"/>
</dbReference>
<dbReference type="GO" id="GO:0007399">
    <property type="term" value="P:nervous system development"/>
    <property type="evidence" value="ECO:0007669"/>
    <property type="project" value="UniProtKB-KW"/>
</dbReference>
<dbReference type="GO" id="GO:2000144">
    <property type="term" value="P:positive regulation of DNA-templated transcription initiation"/>
    <property type="evidence" value="ECO:0000250"/>
    <property type="project" value="UniProtKB"/>
</dbReference>
<dbReference type="GO" id="GO:0010976">
    <property type="term" value="P:positive regulation of neuron projection development"/>
    <property type="evidence" value="ECO:0000250"/>
    <property type="project" value="UniProtKB"/>
</dbReference>
<dbReference type="GO" id="GO:0033120">
    <property type="term" value="P:positive regulation of RNA splicing"/>
    <property type="evidence" value="ECO:0000250"/>
    <property type="project" value="UniProtKB"/>
</dbReference>
<dbReference type="GO" id="GO:0060566">
    <property type="term" value="P:positive regulation of termination of DNA-templated transcription"/>
    <property type="evidence" value="ECO:0000250"/>
    <property type="project" value="UniProtKB"/>
</dbReference>
<dbReference type="GO" id="GO:2000806">
    <property type="term" value="P:positive regulation of termination of RNA polymerase II transcription, poly(A)-coupled"/>
    <property type="evidence" value="ECO:0000250"/>
    <property type="project" value="UniProtKB"/>
</dbReference>
<dbReference type="GO" id="GO:0045944">
    <property type="term" value="P:positive regulation of transcription by RNA polymerase II"/>
    <property type="evidence" value="ECO:0000250"/>
    <property type="project" value="UniProtKB"/>
</dbReference>
<dbReference type="GO" id="GO:0007283">
    <property type="term" value="P:spermatogenesis"/>
    <property type="evidence" value="ECO:0007669"/>
    <property type="project" value="UniProtKB-KW"/>
</dbReference>
<dbReference type="GO" id="GO:0006369">
    <property type="term" value="P:termination of RNA polymerase II transcription"/>
    <property type="evidence" value="ECO:0000315"/>
    <property type="project" value="MGI"/>
</dbReference>
<dbReference type="CDD" id="cd18042">
    <property type="entry name" value="DEXXQc_SETX"/>
    <property type="match status" value="1"/>
</dbReference>
<dbReference type="CDD" id="cd18808">
    <property type="entry name" value="SF1_C_Upf1"/>
    <property type="match status" value="1"/>
</dbReference>
<dbReference type="FunFam" id="3.40.50.300:FF:000798">
    <property type="entry name" value="Probable helicase senataxin"/>
    <property type="match status" value="1"/>
</dbReference>
<dbReference type="FunFam" id="3.40.50.300:FF:000810">
    <property type="entry name" value="probable helicase senataxin"/>
    <property type="match status" value="1"/>
</dbReference>
<dbReference type="Gene3D" id="3.40.50.300">
    <property type="entry name" value="P-loop containing nucleotide triphosphate hydrolases"/>
    <property type="match status" value="2"/>
</dbReference>
<dbReference type="InterPro" id="IPR045055">
    <property type="entry name" value="DNA2/NAM7-like"/>
</dbReference>
<dbReference type="InterPro" id="IPR041679">
    <property type="entry name" value="DNA2/NAM7-like_C"/>
</dbReference>
<dbReference type="InterPro" id="IPR041677">
    <property type="entry name" value="DNA2/NAM7_AAA_11"/>
</dbReference>
<dbReference type="InterPro" id="IPR027417">
    <property type="entry name" value="P-loop_NTPase"/>
</dbReference>
<dbReference type="InterPro" id="IPR047187">
    <property type="entry name" value="SF1_C_Upf1"/>
</dbReference>
<dbReference type="PANTHER" id="PTHR10887">
    <property type="entry name" value="DNA2/NAM7 HELICASE FAMILY"/>
    <property type="match status" value="1"/>
</dbReference>
<dbReference type="PANTHER" id="PTHR10887:SF537">
    <property type="entry name" value="HELICASE SENATAXIN-RELATED"/>
    <property type="match status" value="1"/>
</dbReference>
<dbReference type="Pfam" id="PF13086">
    <property type="entry name" value="AAA_11"/>
    <property type="match status" value="1"/>
</dbReference>
<dbReference type="Pfam" id="PF13087">
    <property type="entry name" value="AAA_12"/>
    <property type="match status" value="1"/>
</dbReference>
<dbReference type="SUPFAM" id="SSF52540">
    <property type="entry name" value="P-loop containing nucleoside triphosphate hydrolases"/>
    <property type="match status" value="1"/>
</dbReference>
<protein>
    <recommendedName>
        <fullName evidence="9">Probable helicase senataxin</fullName>
        <ecNumber>3.6.4.-</ecNumber>
    </recommendedName>
    <alternativeName>
        <fullName>Amyotrophic lateral sclerosis 4 protein homolog</fullName>
    </alternativeName>
    <alternativeName>
        <fullName>SEN1 homolog</fullName>
    </alternativeName>
</protein>
<name>SETX_MOUSE</name>
<feature type="chain" id="PRO_0000307777" description="Probable helicase senataxin">
    <location>
        <begin position="1"/>
        <end position="2646"/>
    </location>
</feature>
<feature type="region of interest" description="Disordered" evidence="4">
    <location>
        <begin position="705"/>
        <end position="734"/>
    </location>
</feature>
<feature type="region of interest" description="Disordered" evidence="4">
    <location>
        <begin position="825"/>
        <end position="876"/>
    </location>
</feature>
<feature type="region of interest" description="Disordered" evidence="4">
    <location>
        <begin position="1001"/>
        <end position="1023"/>
    </location>
</feature>
<feature type="region of interest" description="Disordered" evidence="4">
    <location>
        <begin position="1122"/>
        <end position="1245"/>
    </location>
</feature>
<feature type="region of interest" description="Disordered" evidence="4">
    <location>
        <begin position="1591"/>
        <end position="1627"/>
    </location>
</feature>
<feature type="region of interest" description="Disordered" evidence="4">
    <location>
        <begin position="2450"/>
        <end position="2472"/>
    </location>
</feature>
<feature type="region of interest" description="Disordered" evidence="4">
    <location>
        <begin position="2486"/>
        <end position="2506"/>
    </location>
</feature>
<feature type="region of interest" description="Disordered" evidence="4">
    <location>
        <begin position="2569"/>
        <end position="2624"/>
    </location>
</feature>
<feature type="region of interest" description="Necessary for nuclear localization" evidence="1">
    <location>
        <begin position="2632"/>
        <end position="2646"/>
    </location>
</feature>
<feature type="short sequence motif" description="Bipartite nuclear localization signal" evidence="1">
    <location>
        <begin position="2046"/>
        <end position="2063"/>
    </location>
</feature>
<feature type="compositionally biased region" description="Polar residues" evidence="4">
    <location>
        <begin position="714"/>
        <end position="727"/>
    </location>
</feature>
<feature type="compositionally biased region" description="Acidic residues" evidence="4">
    <location>
        <begin position="867"/>
        <end position="876"/>
    </location>
</feature>
<feature type="compositionally biased region" description="Acidic residues" evidence="4">
    <location>
        <begin position="1003"/>
        <end position="1014"/>
    </location>
</feature>
<feature type="compositionally biased region" description="Basic and acidic residues" evidence="4">
    <location>
        <begin position="1122"/>
        <end position="1133"/>
    </location>
</feature>
<feature type="compositionally biased region" description="Basic residues" evidence="4">
    <location>
        <begin position="1147"/>
        <end position="1156"/>
    </location>
</feature>
<feature type="compositionally biased region" description="Basic and acidic residues" evidence="4">
    <location>
        <begin position="1176"/>
        <end position="1189"/>
    </location>
</feature>
<feature type="compositionally biased region" description="Polar residues" evidence="4">
    <location>
        <begin position="1196"/>
        <end position="1211"/>
    </location>
</feature>
<feature type="compositionally biased region" description="Basic residues" evidence="4">
    <location>
        <begin position="1212"/>
        <end position="1222"/>
    </location>
</feature>
<feature type="compositionally biased region" description="Polar residues" evidence="4">
    <location>
        <begin position="1595"/>
        <end position="1613"/>
    </location>
</feature>
<feature type="compositionally biased region" description="Basic and acidic residues" evidence="4">
    <location>
        <begin position="2496"/>
        <end position="2506"/>
    </location>
</feature>
<feature type="compositionally biased region" description="Basic and acidic residues" evidence="4">
    <location>
        <begin position="2593"/>
        <end position="2608"/>
    </location>
</feature>
<feature type="binding site" evidence="3">
    <location>
        <begin position="1939"/>
        <end position="1946"/>
    </location>
    <ligand>
        <name>ATP</name>
        <dbReference type="ChEBI" id="CHEBI:30616"/>
    </ligand>
</feature>
<feature type="modified residue" description="Phosphoserine" evidence="11">
    <location>
        <position position="102"/>
    </location>
</feature>
<feature type="modified residue" description="Phosphoserine" evidence="2">
    <location>
        <position position="640"/>
    </location>
</feature>
<feature type="modified residue" description="Phosphoserine" evidence="11">
    <location>
        <position position="870"/>
    </location>
</feature>
<feature type="modified residue" description="Phosphoserine" evidence="11">
    <location>
        <position position="871"/>
    </location>
</feature>
<feature type="modified residue" description="Phosphoserine" evidence="11">
    <location>
        <position position="872"/>
    </location>
</feature>
<feature type="modified residue" description="Phosphoserine" evidence="2">
    <location>
        <position position="938"/>
    </location>
</feature>
<feature type="modified residue" description="Phosphoserine" evidence="11">
    <location>
        <position position="1002"/>
    </location>
</feature>
<feature type="modified residue" description="Phosphoserine" evidence="11">
    <location>
        <position position="1004"/>
    </location>
</feature>
<feature type="modified residue" description="Phosphoserine" evidence="2">
    <location>
        <position position="1318"/>
    </location>
</feature>
<feature type="modified residue" description="Phosphoserine" evidence="11">
    <location>
        <position position="1472"/>
    </location>
</feature>
<feature type="modified residue" description="Phosphothreonine" evidence="11">
    <location>
        <position position="1474"/>
    </location>
</feature>
<feature type="modified residue" description="Phosphothreonine" evidence="2">
    <location>
        <position position="2450"/>
    </location>
</feature>
<feature type="cross-link" description="Glycyl lysine isopeptide (Lys-Gly) (interchain with G-Cter in SUMO1)" evidence="2">
    <location>
        <position position="339"/>
    </location>
</feature>
<feature type="cross-link" description="Glycyl lysine isopeptide (Lys-Gly) (interchain with G-Cter in SUMO2)" evidence="2">
    <location>
        <position position="1051"/>
    </location>
</feature>
<feature type="cross-link" description="Glycyl lysine isopeptide (Lys-Gly) (interchain with G-Cter in SUMO2)" evidence="2">
    <location>
        <position position="1328"/>
    </location>
</feature>
<feature type="cross-link" description="Glycyl lysine isopeptide (Lys-Gly) (interchain with G-Cter in SUMO2)" evidence="2">
    <location>
        <position position="1329"/>
    </location>
</feature>
<feature type="cross-link" description="Glycyl lysine isopeptide (Lys-Gly) (interchain with G-Cter in SUMO2)" evidence="2">
    <location>
        <position position="1398"/>
    </location>
</feature>
<feature type="splice variant" id="VSP_028827" description="In isoform 2." evidence="8">
    <location>
        <begin position="1"/>
        <end position="381"/>
    </location>
</feature>
<feature type="sequence conflict" description="In Ref. 2; BAC32054." evidence="9" ref="2">
    <original>S</original>
    <variation>C</variation>
    <location>
        <position position="644"/>
    </location>
</feature>
<feature type="sequence conflict" description="In Ref. 2; BAC33309." evidence="9" ref="2">
    <original>Q</original>
    <variation>R</variation>
    <location>
        <position position="1048"/>
    </location>
</feature>
<evidence type="ECO:0000250" key="1"/>
<evidence type="ECO:0000250" key="2">
    <source>
        <dbReference type="UniProtKB" id="Q7Z333"/>
    </source>
</evidence>
<evidence type="ECO:0000255" key="3"/>
<evidence type="ECO:0000256" key="4">
    <source>
        <dbReference type="SAM" id="MobiDB-lite"/>
    </source>
</evidence>
<evidence type="ECO:0000269" key="5">
    <source>
    </source>
</evidence>
<evidence type="ECO:0000269" key="6">
    <source>
    </source>
</evidence>
<evidence type="ECO:0000269" key="7">
    <source>
    </source>
</evidence>
<evidence type="ECO:0000303" key="8">
    <source>
    </source>
</evidence>
<evidence type="ECO:0000305" key="9"/>
<evidence type="ECO:0000312" key="10">
    <source>
        <dbReference type="MGI" id="MGI:2443480"/>
    </source>
</evidence>
<evidence type="ECO:0007744" key="11">
    <source>
    </source>
</evidence>
<organism>
    <name type="scientific">Mus musculus</name>
    <name type="common">Mouse</name>
    <dbReference type="NCBI Taxonomy" id="10090"/>
    <lineage>
        <taxon>Eukaryota</taxon>
        <taxon>Metazoa</taxon>
        <taxon>Chordata</taxon>
        <taxon>Craniata</taxon>
        <taxon>Vertebrata</taxon>
        <taxon>Euteleostomi</taxon>
        <taxon>Mammalia</taxon>
        <taxon>Eutheria</taxon>
        <taxon>Euarchontoglires</taxon>
        <taxon>Glires</taxon>
        <taxon>Rodentia</taxon>
        <taxon>Myomorpha</taxon>
        <taxon>Muroidea</taxon>
        <taxon>Muridae</taxon>
        <taxon>Murinae</taxon>
        <taxon>Mus</taxon>
        <taxon>Mus</taxon>
    </lineage>
</organism>
<reference key="1">
    <citation type="journal article" date="2009" name="PLoS Biol.">
        <title>Lineage-specific biology revealed by a finished genome assembly of the mouse.</title>
        <authorList>
            <person name="Church D.M."/>
            <person name="Goodstadt L."/>
            <person name="Hillier L.W."/>
            <person name="Zody M.C."/>
            <person name="Goldstein S."/>
            <person name="She X."/>
            <person name="Bult C.J."/>
            <person name="Agarwala R."/>
            <person name="Cherry J.L."/>
            <person name="DiCuccio M."/>
            <person name="Hlavina W."/>
            <person name="Kapustin Y."/>
            <person name="Meric P."/>
            <person name="Maglott D."/>
            <person name="Birtle Z."/>
            <person name="Marques A.C."/>
            <person name="Graves T."/>
            <person name="Zhou S."/>
            <person name="Teague B."/>
            <person name="Potamousis K."/>
            <person name="Churas C."/>
            <person name="Place M."/>
            <person name="Herschleb J."/>
            <person name="Runnheim R."/>
            <person name="Forrest D."/>
            <person name="Amos-Landgraf J."/>
            <person name="Schwartz D.C."/>
            <person name="Cheng Z."/>
            <person name="Lindblad-Toh K."/>
            <person name="Eichler E.E."/>
            <person name="Ponting C.P."/>
        </authorList>
    </citation>
    <scope>NUCLEOTIDE SEQUENCE [LARGE SCALE GENOMIC DNA]</scope>
    <source>
        <strain>C57BL/6J</strain>
    </source>
</reference>
<reference key="2">
    <citation type="journal article" date="2005" name="Science">
        <title>The transcriptional landscape of the mammalian genome.</title>
        <authorList>
            <person name="Carninci P."/>
            <person name="Kasukawa T."/>
            <person name="Katayama S."/>
            <person name="Gough J."/>
            <person name="Frith M.C."/>
            <person name="Maeda N."/>
            <person name="Oyama R."/>
            <person name="Ravasi T."/>
            <person name="Lenhard B."/>
            <person name="Wells C."/>
            <person name="Kodzius R."/>
            <person name="Shimokawa K."/>
            <person name="Bajic V.B."/>
            <person name="Brenner S.E."/>
            <person name="Batalov S."/>
            <person name="Forrest A.R."/>
            <person name="Zavolan M."/>
            <person name="Davis M.J."/>
            <person name="Wilming L.G."/>
            <person name="Aidinis V."/>
            <person name="Allen J.E."/>
            <person name="Ambesi-Impiombato A."/>
            <person name="Apweiler R."/>
            <person name="Aturaliya R.N."/>
            <person name="Bailey T.L."/>
            <person name="Bansal M."/>
            <person name="Baxter L."/>
            <person name="Beisel K.W."/>
            <person name="Bersano T."/>
            <person name="Bono H."/>
            <person name="Chalk A.M."/>
            <person name="Chiu K.P."/>
            <person name="Choudhary V."/>
            <person name="Christoffels A."/>
            <person name="Clutterbuck D.R."/>
            <person name="Crowe M.L."/>
            <person name="Dalla E."/>
            <person name="Dalrymple B.P."/>
            <person name="de Bono B."/>
            <person name="Della Gatta G."/>
            <person name="di Bernardo D."/>
            <person name="Down T."/>
            <person name="Engstrom P."/>
            <person name="Fagiolini M."/>
            <person name="Faulkner G."/>
            <person name="Fletcher C.F."/>
            <person name="Fukushima T."/>
            <person name="Furuno M."/>
            <person name="Futaki S."/>
            <person name="Gariboldi M."/>
            <person name="Georgii-Hemming P."/>
            <person name="Gingeras T.R."/>
            <person name="Gojobori T."/>
            <person name="Green R.E."/>
            <person name="Gustincich S."/>
            <person name="Harbers M."/>
            <person name="Hayashi Y."/>
            <person name="Hensch T.K."/>
            <person name="Hirokawa N."/>
            <person name="Hill D."/>
            <person name="Huminiecki L."/>
            <person name="Iacono M."/>
            <person name="Ikeo K."/>
            <person name="Iwama A."/>
            <person name="Ishikawa T."/>
            <person name="Jakt M."/>
            <person name="Kanapin A."/>
            <person name="Katoh M."/>
            <person name="Kawasawa Y."/>
            <person name="Kelso J."/>
            <person name="Kitamura H."/>
            <person name="Kitano H."/>
            <person name="Kollias G."/>
            <person name="Krishnan S.P."/>
            <person name="Kruger A."/>
            <person name="Kummerfeld S.K."/>
            <person name="Kurochkin I.V."/>
            <person name="Lareau L.F."/>
            <person name="Lazarevic D."/>
            <person name="Lipovich L."/>
            <person name="Liu J."/>
            <person name="Liuni S."/>
            <person name="McWilliam S."/>
            <person name="Madan Babu M."/>
            <person name="Madera M."/>
            <person name="Marchionni L."/>
            <person name="Matsuda H."/>
            <person name="Matsuzawa S."/>
            <person name="Miki H."/>
            <person name="Mignone F."/>
            <person name="Miyake S."/>
            <person name="Morris K."/>
            <person name="Mottagui-Tabar S."/>
            <person name="Mulder N."/>
            <person name="Nakano N."/>
            <person name="Nakauchi H."/>
            <person name="Ng P."/>
            <person name="Nilsson R."/>
            <person name="Nishiguchi S."/>
            <person name="Nishikawa S."/>
            <person name="Nori F."/>
            <person name="Ohara O."/>
            <person name="Okazaki Y."/>
            <person name="Orlando V."/>
            <person name="Pang K.C."/>
            <person name="Pavan W.J."/>
            <person name="Pavesi G."/>
            <person name="Pesole G."/>
            <person name="Petrovsky N."/>
            <person name="Piazza S."/>
            <person name="Reed J."/>
            <person name="Reid J.F."/>
            <person name="Ring B.Z."/>
            <person name="Ringwald M."/>
            <person name="Rost B."/>
            <person name="Ruan Y."/>
            <person name="Salzberg S.L."/>
            <person name="Sandelin A."/>
            <person name="Schneider C."/>
            <person name="Schoenbach C."/>
            <person name="Sekiguchi K."/>
            <person name="Semple C.A."/>
            <person name="Seno S."/>
            <person name="Sessa L."/>
            <person name="Sheng Y."/>
            <person name="Shibata Y."/>
            <person name="Shimada H."/>
            <person name="Shimada K."/>
            <person name="Silva D."/>
            <person name="Sinclair B."/>
            <person name="Sperling S."/>
            <person name="Stupka E."/>
            <person name="Sugiura K."/>
            <person name="Sultana R."/>
            <person name="Takenaka Y."/>
            <person name="Taki K."/>
            <person name="Tammoja K."/>
            <person name="Tan S.L."/>
            <person name="Tang S."/>
            <person name="Taylor M.S."/>
            <person name="Tegner J."/>
            <person name="Teichmann S.A."/>
            <person name="Ueda H.R."/>
            <person name="van Nimwegen E."/>
            <person name="Verardo R."/>
            <person name="Wei C.L."/>
            <person name="Yagi K."/>
            <person name="Yamanishi H."/>
            <person name="Zabarovsky E."/>
            <person name="Zhu S."/>
            <person name="Zimmer A."/>
            <person name="Hide W."/>
            <person name="Bult C."/>
            <person name="Grimmond S.M."/>
            <person name="Teasdale R.D."/>
            <person name="Liu E.T."/>
            <person name="Brusic V."/>
            <person name="Quackenbush J."/>
            <person name="Wahlestedt C."/>
            <person name="Mattick J.S."/>
            <person name="Hume D.A."/>
            <person name="Kai C."/>
            <person name="Sasaki D."/>
            <person name="Tomaru Y."/>
            <person name="Fukuda S."/>
            <person name="Kanamori-Katayama M."/>
            <person name="Suzuki M."/>
            <person name="Aoki J."/>
            <person name="Arakawa T."/>
            <person name="Iida J."/>
            <person name="Imamura K."/>
            <person name="Itoh M."/>
            <person name="Kato T."/>
            <person name="Kawaji H."/>
            <person name="Kawagashira N."/>
            <person name="Kawashima T."/>
            <person name="Kojima M."/>
            <person name="Kondo S."/>
            <person name="Konno H."/>
            <person name="Nakano K."/>
            <person name="Ninomiya N."/>
            <person name="Nishio T."/>
            <person name="Okada M."/>
            <person name="Plessy C."/>
            <person name="Shibata K."/>
            <person name="Shiraki T."/>
            <person name="Suzuki S."/>
            <person name="Tagami M."/>
            <person name="Waki K."/>
            <person name="Watahiki A."/>
            <person name="Okamura-Oho Y."/>
            <person name="Suzuki H."/>
            <person name="Kawai J."/>
            <person name="Hayashizaki Y."/>
        </authorList>
    </citation>
    <scope>NUCLEOTIDE SEQUENCE [LARGE SCALE MRNA] OF 1-1050 (ISOFORM 2)</scope>
    <scope>NUCLEOTIDE SEQUENCE [LARGE SCALE MRNA] OF 1-858 (ISOFORM 1)</scope>
    <scope>NUCLEOTIDE SEQUENCE [LARGE SCALE MRNA] OF 2464-2646</scope>
    <source>
        <strain>C57BL/6J</strain>
        <tissue>Head</tissue>
        <tissue>Retina</tissue>
        <tissue>Testis</tissue>
    </source>
</reference>
<reference key="3">
    <citation type="journal article" date="2004" name="Genome Res.">
        <title>The status, quality, and expansion of the NIH full-length cDNA project: the Mammalian Gene Collection (MGC).</title>
        <authorList>
            <consortium name="The MGC Project Team"/>
        </authorList>
    </citation>
    <scope>NUCLEOTIDE SEQUENCE [LARGE SCALE MRNA] OF 1745-2646 (ISOFORM 1)</scope>
    <source>
        <strain>129</strain>
        <strain>C57BL/6J</strain>
        <tissue>Brain</tissue>
        <tissue>Mammary tumor</tissue>
    </source>
</reference>
<reference key="4">
    <citation type="journal article" date="2003" name="DNA Res.">
        <title>Prediction of the coding sequences of mouse homologues of KIAA gene: III. The complete nucleotide sequences of 500 mouse KIAA-homologous cDNAs identified by screening of terminal sequences of cDNA clones randomly sampled from size-fractionated libraries.</title>
        <authorList>
            <person name="Okazaki N."/>
            <person name="Kikuno R."/>
            <person name="Ohara R."/>
            <person name="Inamoto S."/>
            <person name="Koseki H."/>
            <person name="Hiraoka S."/>
            <person name="Saga Y."/>
            <person name="Nagase T."/>
            <person name="Ohara O."/>
            <person name="Koga H."/>
        </authorList>
    </citation>
    <scope>NUCLEOTIDE SEQUENCE [LARGE SCALE MRNA] OF 1915-2646 (ISOFORM 1)</scope>
    <source>
        <tissue>Embryonic tail</tissue>
    </source>
</reference>
<reference key="5">
    <citation type="journal article" date="2004" name="Nat. Genet.">
        <title>Senataxin, the ortholog of a yeast RNA helicase, is mutant in ataxia-ocular apraxia 2.</title>
        <authorList>
            <person name="Moreira M.-C."/>
            <person name="Klur S."/>
            <person name="Watanabe M."/>
            <person name="Nemeth A.H."/>
            <person name="Le Ber I."/>
            <person name="Moniz J.-C."/>
            <person name="Tranchant C."/>
            <person name="Aubourg P."/>
            <person name="Tazir M."/>
            <person name="Schoels L."/>
            <person name="Pandolfo M."/>
            <person name="Schulz J.B."/>
            <person name="Pouget J."/>
            <person name="Calvas P."/>
            <person name="Shizuka-Ikeda M."/>
            <person name="Shoji M."/>
            <person name="Tanaka M."/>
            <person name="Izatt L."/>
            <person name="Shaw C.E."/>
            <person name="M'Zahem A."/>
            <person name="Dunne E."/>
            <person name="Bomont P."/>
            <person name="Benhassine T."/>
            <person name="Bouslam N."/>
            <person name="Stevanin G."/>
            <person name="Brice A."/>
            <person name="Guimaraes J."/>
            <person name="Mendonca P."/>
            <person name="Barbot C."/>
            <person name="Coutinho P."/>
            <person name="Sequeiros J."/>
            <person name="Duerr A."/>
            <person name="Warter J.-M."/>
            <person name="Koenig M."/>
        </authorList>
    </citation>
    <scope>IDENTIFICATION (ISOFORM 1)</scope>
    <source>
        <strain>C57BL/6J</strain>
    </source>
</reference>
<reference key="6">
    <citation type="journal article" date="2006" name="Neurobiol. Dis.">
        <title>Senataxin, the yeast Sen1p orthologue: characterization of a unique protein in which recessive mutations cause ataxia and dominant mutations cause motor neuron disease.</title>
        <authorList>
            <person name="Chen Y.-Z."/>
            <person name="Hashemi S.H."/>
            <person name="Anderson S.K."/>
            <person name="Huang Y."/>
            <person name="Moreira M.-C."/>
            <person name="Lynch D.R."/>
            <person name="Glass I.A."/>
            <person name="Chance P.F."/>
            <person name="Bennett C.L."/>
        </authorList>
    </citation>
    <scope>SUBCELLULAR LOCATION</scope>
    <scope>TISSUE SPECIFICITY</scope>
</reference>
<reference key="7">
    <citation type="journal article" date="2010" name="Cell">
        <title>A tissue-specific atlas of mouse protein phosphorylation and expression.</title>
        <authorList>
            <person name="Huttlin E.L."/>
            <person name="Jedrychowski M.P."/>
            <person name="Elias J.E."/>
            <person name="Goswami T."/>
            <person name="Rad R."/>
            <person name="Beausoleil S.A."/>
            <person name="Villen J."/>
            <person name="Haas W."/>
            <person name="Sowa M.E."/>
            <person name="Gygi S.P."/>
        </authorList>
    </citation>
    <scope>PHOSPHORYLATION [LARGE SCALE ANALYSIS] AT SER-102; SER-870; SER-871; SER-872; SER-1002; SER-1004; SER-1472 AND THR-1474</scope>
    <scope>IDENTIFICATION BY MASS SPECTROMETRY [LARGE SCALE ANALYSIS]</scope>
    <source>
        <tissue>Testis</tissue>
    </source>
</reference>
<reference key="8">
    <citation type="journal article" date="2012" name="Science">
        <title>Feedback regulation of transcriptional termination by the mammalian circadian clock PERIOD complex.</title>
        <authorList>
            <person name="Padmanabhan K."/>
            <person name="Robles M.S."/>
            <person name="Westerling T."/>
            <person name="Weitz C.J."/>
        </authorList>
    </citation>
    <scope>FUNCTION IN CIRCADIAN RHYTHMS</scope>
    <scope>INTERACTION WITH PER2</scope>
</reference>
<reference key="9">
    <citation type="journal article" date="2013" name="PLoS Genet.">
        <title>Senataxin plays an essential role with DNA damage response proteins in meiotic recombination and gene silencing.</title>
        <authorList>
            <person name="Becherel O.J."/>
            <person name="Yeo A.J."/>
            <person name="Stellati A."/>
            <person name="Heng E.Y."/>
            <person name="Luff J."/>
            <person name="Suraweera A.M."/>
            <person name="Woods R."/>
            <person name="Fleming J."/>
            <person name="Carrie D."/>
            <person name="McKinney K."/>
            <person name="Xu X."/>
            <person name="Deng C."/>
            <person name="Lavin M.F."/>
        </authorList>
    </citation>
    <scope>FUNCTION</scope>
    <scope>SUBCELLULAR LOCATION</scope>
    <scope>DISRUPTION PHENOTYPE</scope>
</reference>
<proteinExistence type="evidence at protein level"/>
<gene>
    <name evidence="10" type="primary">Setx</name>
    <name type="synonym">Als4</name>
    <name type="synonym">Kiaa0625</name>
</gene>
<accession>A2AKX3</accession>
<accession>A2AKX4</accession>
<accession>A2AR33</accession>
<accession>Q6IMG6</accession>
<accession>Q6PED8</accession>
<accession>Q6ZQ81</accession>
<accession>Q80V90</accession>
<accession>Q8C5P1</accession>
<accession>Q8C859</accession>
<accession>Q8C8P6</accession>